<gene>
    <name type="primary">XYL1</name>
    <name type="synonym">XYN22</name>
</gene>
<feature type="signal peptide" evidence="1">
    <location>
        <begin position="1"/>
        <end position="20"/>
    </location>
</feature>
<feature type="chain" id="PRO_0000429857" description="Endo-1,4-beta-xylanase 1">
    <location>
        <begin position="21"/>
        <end position="233"/>
    </location>
</feature>
<feature type="domain" description="GH11" evidence="2">
    <location>
        <begin position="40"/>
        <end position="230"/>
    </location>
</feature>
<feature type="active site" description="Nucleophile" evidence="3">
    <location>
        <position position="126"/>
    </location>
</feature>
<feature type="active site" description="Proton donor" evidence="4">
    <location>
        <position position="217"/>
    </location>
</feature>
<feature type="glycosylation site" description="N-linked (GlcNAc...) asparagine" evidence="1">
    <location>
        <position position="27"/>
    </location>
</feature>
<dbReference type="EC" id="3.2.1.8"/>
<dbReference type="EMBL" id="L37529">
    <property type="protein sequence ID" value="AAC41683.1"/>
    <property type="molecule type" value="Genomic_DNA"/>
</dbReference>
<dbReference type="SMR" id="P0CT48"/>
<dbReference type="CAZy" id="GH11">
    <property type="family name" value="Glycoside Hydrolase Family 11"/>
</dbReference>
<dbReference type="GlyCosmos" id="P0CT48">
    <property type="glycosylation" value="1 site, No reported glycans"/>
</dbReference>
<dbReference type="OMA" id="FKQFWAI"/>
<dbReference type="UniPathway" id="UPA00114"/>
<dbReference type="PHI-base" id="PHI:567"/>
<dbReference type="Proteomes" id="UP000515153">
    <property type="component" value="Unplaced"/>
</dbReference>
<dbReference type="GO" id="GO:0005576">
    <property type="term" value="C:extracellular region"/>
    <property type="evidence" value="ECO:0007669"/>
    <property type="project" value="UniProtKB-SubCell"/>
</dbReference>
<dbReference type="GO" id="GO:0031176">
    <property type="term" value="F:endo-1,4-beta-xylanase activity"/>
    <property type="evidence" value="ECO:0007669"/>
    <property type="project" value="UniProtKB-EC"/>
</dbReference>
<dbReference type="GO" id="GO:0045493">
    <property type="term" value="P:xylan catabolic process"/>
    <property type="evidence" value="ECO:0007669"/>
    <property type="project" value="UniProtKB-UniPathway"/>
</dbReference>
<dbReference type="FunFam" id="2.60.120.180:FF:000001">
    <property type="entry name" value="Endo-1,4-beta-xylanase"/>
    <property type="match status" value="1"/>
</dbReference>
<dbReference type="Gene3D" id="2.60.120.180">
    <property type="match status" value="1"/>
</dbReference>
<dbReference type="InterPro" id="IPR013320">
    <property type="entry name" value="ConA-like_dom_sf"/>
</dbReference>
<dbReference type="InterPro" id="IPR013319">
    <property type="entry name" value="GH11/12"/>
</dbReference>
<dbReference type="InterPro" id="IPR018208">
    <property type="entry name" value="GH11_AS_1"/>
</dbReference>
<dbReference type="InterPro" id="IPR033119">
    <property type="entry name" value="GH11_AS_2"/>
</dbReference>
<dbReference type="InterPro" id="IPR033123">
    <property type="entry name" value="GH11_dom"/>
</dbReference>
<dbReference type="InterPro" id="IPR001137">
    <property type="entry name" value="Glyco_hydro_11"/>
</dbReference>
<dbReference type="PANTHER" id="PTHR46828">
    <property type="entry name" value="ENDO-1,4-BETA-XYLANASE A-RELATED"/>
    <property type="match status" value="1"/>
</dbReference>
<dbReference type="PANTHER" id="PTHR46828:SF2">
    <property type="entry name" value="ENDO-1,4-BETA-XYLANASE A-RELATED"/>
    <property type="match status" value="1"/>
</dbReference>
<dbReference type="Pfam" id="PF00457">
    <property type="entry name" value="Glyco_hydro_11"/>
    <property type="match status" value="1"/>
</dbReference>
<dbReference type="PRINTS" id="PR00911">
    <property type="entry name" value="GLHYDRLASE11"/>
</dbReference>
<dbReference type="SUPFAM" id="SSF49899">
    <property type="entry name" value="Concanavalin A-like lectins/glucanases"/>
    <property type="match status" value="1"/>
</dbReference>
<dbReference type="PROSITE" id="PS00776">
    <property type="entry name" value="GH11_1"/>
    <property type="match status" value="1"/>
</dbReference>
<dbReference type="PROSITE" id="PS00777">
    <property type="entry name" value="GH11_2"/>
    <property type="match status" value="1"/>
</dbReference>
<dbReference type="PROSITE" id="PS51761">
    <property type="entry name" value="GH11_3"/>
    <property type="match status" value="1"/>
</dbReference>
<protein>
    <recommendedName>
        <fullName>Endo-1,4-beta-xylanase 1</fullName>
        <shortName>Xylanase 1</shortName>
        <ecNumber>3.2.1.8</ecNumber>
    </recommendedName>
    <alternativeName>
        <fullName>1,4-beta-D-xylan xylanohydrolase 1</fullName>
    </alternativeName>
    <alternativeName>
        <fullName>Xylanase 22</fullName>
    </alternativeName>
</protein>
<accession>P0CT48</accession>
<accession>A4QZG4</accession>
<accession>G4N2U4</accession>
<accession>P55335</accession>
<accession>Q01171</accession>
<reference key="1">
    <citation type="journal article" date="1995" name="Mol. Plant Microbe Interact.">
        <title>Purification, cloning and characterization of two xylanases from Magnaporthe grisea, the rice blast fungus.</title>
        <authorList>
            <person name="Wu S.C."/>
            <person name="Kaufman S."/>
            <person name="Darvill A.G."/>
            <person name="Albersheim P."/>
        </authorList>
    </citation>
    <scope>NUCLEOTIDE SEQUENCE [GENOMIC DNA]</scope>
    <scope>SUBCELLULAR LOCATION</scope>
    <scope>CATALYTIC ACTIVITY</scope>
    <scope>INDUCTION</scope>
    <source>
        <strain>KEN60-19</strain>
    </source>
</reference>
<reference key="2">
    <citation type="journal article" date="1997" name="Mol. Plant Microbe Interact.">
        <title>Deletion of two endo-beta-1,4-xylanase genes reveals additional isozymes secreted by the rice blast fungus.</title>
        <authorList>
            <person name="Wu S.C."/>
            <person name="Ham K.S."/>
            <person name="Darvill A.G."/>
            <person name="Albersheim P."/>
        </authorList>
    </citation>
    <scope>FUNCTION</scope>
    <scope>DISRUPTION PHENOTYPE</scope>
    <source>
        <strain>CP987</strain>
    </source>
</reference>
<name>XYN1_PYRGI</name>
<evidence type="ECO:0000255" key="1"/>
<evidence type="ECO:0000255" key="2">
    <source>
        <dbReference type="PROSITE-ProRule" id="PRU01097"/>
    </source>
</evidence>
<evidence type="ECO:0000255" key="3">
    <source>
        <dbReference type="PROSITE-ProRule" id="PRU10062"/>
    </source>
</evidence>
<evidence type="ECO:0000255" key="4">
    <source>
        <dbReference type="PROSITE-ProRule" id="PRU10063"/>
    </source>
</evidence>
<evidence type="ECO:0000269" key="5">
    <source>
    </source>
</evidence>
<evidence type="ECO:0000269" key="6">
    <source ref="2"/>
</evidence>
<evidence type="ECO:0000303" key="7">
    <source>
    </source>
</evidence>
<sequence>MVSFTSIVTAVVALAGSALAIPAPDGNMTGFPFEQLMRRQSTPSSTGRHNGYYYSWWTDGASPVQYQNGNGGSYSVQWQSGGNFVGGKGWMPGGSKSITYSGTFNPVNNGNAYLCIYGWTQNPLVEYYILENYGEYNPGNSAQSRGTLQAAGGTYTLHESTRVNQPSIEGTRTFQQYWAIRQQKRNSGTVNTGEFFQAWERAGMRMGNHNYMIVATEGYRSAGNSNINVQTPA</sequence>
<comment type="function">
    <text evidence="6">Endo-1,4-beta-xylanase involved in the hydrolysis of xylan, a major structural heterogeneous polysaccharide found in plant biomass representing the second most abundant polysaccharide in the biosphere, after cellulose. Accounts for approximately 70 percent of the endoxylanase activity in the culture filtrate.</text>
</comment>
<comment type="catalytic activity">
    <reaction evidence="5">
        <text>Endohydrolysis of (1-&gt;4)-beta-D-xylosidic linkages in xylans.</text>
        <dbReference type="EC" id="3.2.1.8"/>
    </reaction>
</comment>
<comment type="pathway">
    <text>Glycan degradation; xylan degradation.</text>
</comment>
<comment type="subcellular location">
    <subcellularLocation>
        <location evidence="5">Secreted</location>
    </subcellularLocation>
</comment>
<comment type="induction">
    <text evidence="5">Expressed in presence of rice cell walls or on oat spelt xylan, but not when grown on sucrose.</text>
</comment>
<comment type="disruption phenotype">
    <text evidence="6">Retains 88 percent of the catalytic activity. Double xyl1/xyl2 deletion mutant retains 19 percent of the activity and exhibits a 50 percent reduction in accumulation of total mycelial mass.</text>
</comment>
<comment type="similarity">
    <text evidence="7">Belongs to the glycosyl hydrolase 11 (cellulase G) family.</text>
</comment>
<organism>
    <name type="scientific">Pyricularia grisea</name>
    <name type="common">Crabgrass-specific blast fungus</name>
    <name type="synonym">Magnaporthe grisea</name>
    <dbReference type="NCBI Taxonomy" id="148305"/>
    <lineage>
        <taxon>Eukaryota</taxon>
        <taxon>Fungi</taxon>
        <taxon>Dikarya</taxon>
        <taxon>Ascomycota</taxon>
        <taxon>Pezizomycotina</taxon>
        <taxon>Sordariomycetes</taxon>
        <taxon>Sordariomycetidae</taxon>
        <taxon>Magnaporthales</taxon>
        <taxon>Pyriculariaceae</taxon>
        <taxon>Pyricularia</taxon>
    </lineage>
</organism>
<proteinExistence type="evidence at protein level"/>
<keyword id="KW-0119">Carbohydrate metabolism</keyword>
<keyword id="KW-0325">Glycoprotein</keyword>
<keyword id="KW-0326">Glycosidase</keyword>
<keyword id="KW-0378">Hydrolase</keyword>
<keyword id="KW-0624">Polysaccharide degradation</keyword>
<keyword id="KW-1185">Reference proteome</keyword>
<keyword id="KW-0964">Secreted</keyword>
<keyword id="KW-0732">Signal</keyword>
<keyword id="KW-0858">Xylan degradation</keyword>